<name>Y218_STRR6</name>
<evidence type="ECO:0000255" key="1">
    <source>
        <dbReference type="HAMAP-Rule" id="MF_01221"/>
    </source>
</evidence>
<keyword id="KW-1185">Reference proteome</keyword>
<reference key="1">
    <citation type="journal article" date="2001" name="J. Bacteriol.">
        <title>Genome of the bacterium Streptococcus pneumoniae strain R6.</title>
        <authorList>
            <person name="Hoskins J."/>
            <person name="Alborn W.E. Jr."/>
            <person name="Arnold J."/>
            <person name="Blaszczak L.C."/>
            <person name="Burgett S."/>
            <person name="DeHoff B.S."/>
            <person name="Estrem S.T."/>
            <person name="Fritz L."/>
            <person name="Fu D.-J."/>
            <person name="Fuller W."/>
            <person name="Geringer C."/>
            <person name="Gilmour R."/>
            <person name="Glass J.S."/>
            <person name="Khoja H."/>
            <person name="Kraft A.R."/>
            <person name="Lagace R.E."/>
            <person name="LeBlanc D.J."/>
            <person name="Lee L.N."/>
            <person name="Lefkowitz E.J."/>
            <person name="Lu J."/>
            <person name="Matsushima P."/>
            <person name="McAhren S.M."/>
            <person name="McHenney M."/>
            <person name="McLeaster K."/>
            <person name="Mundy C.W."/>
            <person name="Nicas T.I."/>
            <person name="Norris F.H."/>
            <person name="O'Gara M."/>
            <person name="Peery R.B."/>
            <person name="Robertson G.T."/>
            <person name="Rockey P."/>
            <person name="Sun P.-M."/>
            <person name="Winkler M.E."/>
            <person name="Yang Y."/>
            <person name="Young-Bellido M."/>
            <person name="Zhao G."/>
            <person name="Zook C.A."/>
            <person name="Baltz R.H."/>
            <person name="Jaskunas S.R."/>
            <person name="Rosteck P.R. Jr."/>
            <person name="Skatrud P.L."/>
            <person name="Glass J.I."/>
        </authorList>
    </citation>
    <scope>NUCLEOTIDE SEQUENCE [LARGE SCALE GENOMIC DNA]</scope>
    <source>
        <strain>ATCC BAA-255 / R6</strain>
    </source>
</reference>
<proteinExistence type="inferred from homology"/>
<protein>
    <recommendedName>
        <fullName evidence="1">UPF0210 protein spr0218</fullName>
    </recommendedName>
</protein>
<organism>
    <name type="scientific">Streptococcus pneumoniae (strain ATCC BAA-255 / R6)</name>
    <dbReference type="NCBI Taxonomy" id="171101"/>
    <lineage>
        <taxon>Bacteria</taxon>
        <taxon>Bacillati</taxon>
        <taxon>Bacillota</taxon>
        <taxon>Bacilli</taxon>
        <taxon>Lactobacillales</taxon>
        <taxon>Streptococcaceae</taxon>
        <taxon>Streptococcus</taxon>
    </lineage>
</organism>
<dbReference type="EMBL" id="AE007317">
    <property type="protein sequence ID" value="AAK99022.1"/>
    <property type="molecule type" value="Genomic_DNA"/>
</dbReference>
<dbReference type="PIR" id="B97899">
    <property type="entry name" value="B97899"/>
</dbReference>
<dbReference type="RefSeq" id="NP_357812.1">
    <property type="nucleotide sequence ID" value="NC_003098.1"/>
</dbReference>
<dbReference type="RefSeq" id="WP_000354918.1">
    <property type="nucleotide sequence ID" value="NC_003098.1"/>
</dbReference>
<dbReference type="SMR" id="Q8DRD2"/>
<dbReference type="STRING" id="171101.spr0218"/>
<dbReference type="KEGG" id="spr:spr0218"/>
<dbReference type="PATRIC" id="fig|171101.6.peg.250"/>
<dbReference type="eggNOG" id="COG2848">
    <property type="taxonomic scope" value="Bacteria"/>
</dbReference>
<dbReference type="HOGENOM" id="CLU_048704_0_0_9"/>
<dbReference type="Proteomes" id="UP000000586">
    <property type="component" value="Chromosome"/>
</dbReference>
<dbReference type="CDD" id="cd08025">
    <property type="entry name" value="RNR_PFL_like_DUF711"/>
    <property type="match status" value="1"/>
</dbReference>
<dbReference type="Gene3D" id="3.20.70.20">
    <property type="match status" value="1"/>
</dbReference>
<dbReference type="HAMAP" id="MF_01221">
    <property type="entry name" value="UPF0210"/>
    <property type="match status" value="1"/>
</dbReference>
<dbReference type="InterPro" id="IPR007841">
    <property type="entry name" value="UPF0210"/>
</dbReference>
<dbReference type="NCBIfam" id="NF003700">
    <property type="entry name" value="PRK05313.1"/>
    <property type="match status" value="1"/>
</dbReference>
<dbReference type="PANTHER" id="PTHR37560:SF1">
    <property type="entry name" value="UPF0210 PROTEIN MJ1665"/>
    <property type="match status" value="1"/>
</dbReference>
<dbReference type="PANTHER" id="PTHR37560">
    <property type="entry name" value="UPF0210 PROTEIN SPR0218"/>
    <property type="match status" value="1"/>
</dbReference>
<dbReference type="Pfam" id="PF05167">
    <property type="entry name" value="DUF711"/>
    <property type="match status" value="1"/>
</dbReference>
<dbReference type="SUPFAM" id="SSF51998">
    <property type="entry name" value="PFL-like glycyl radical enzymes"/>
    <property type="match status" value="1"/>
</dbReference>
<comment type="subunit">
    <text evidence="1">Homodimer.</text>
</comment>
<comment type="similarity">
    <text evidence="1">Belongs to the UPF0210 family.</text>
</comment>
<gene>
    <name type="ordered locus">spr0218</name>
</gene>
<sequence length="445" mass="46381">MDIRQVTETIAMIEEQNFDIRTITMGISLLDCIDPNINRAAEKIYQKITTKAANLVAVGDEIAAELGIPIVNKRVSVTPISLIGAATDATDYVVLAKALDKAAKEIGVDFIGGFSALVQKGYQKGDEILINSIPRALAETDKVCSSVNIGSTKSGINMTAVADMGRIIKETANLSDMGVAKLVVFANAVEDNPFMAGAFHGVGEADVIINVGVSGPGVVKRALEKVRGQSFDVVAETVKKTAFKITRIGQLVGQMASERLGVEFGIVDLSLAPTPAVGDSVARVLEEMGLETVGTHGTTAALALLNDQVKKGGVMACNQVGGLSGAFIPVSEDEGMIAAVQNGSLNLEKLEAMTAICSVGLDMIAIPEDTPAETIAAMIADEAAIGVINMKTTAVRIIPKGREGDMIEFGGLLGTAPVMKVNGASSVDFISRGGQIPAPIHSFKN</sequence>
<accession>Q8DRD2</accession>
<feature type="chain" id="PRO_0000070562" description="UPF0210 protein spr0218">
    <location>
        <begin position="1"/>
        <end position="445"/>
    </location>
</feature>